<dbReference type="EMBL" id="CP000860">
    <property type="protein sequence ID" value="ACA58801.1"/>
    <property type="molecule type" value="Genomic_DNA"/>
</dbReference>
<dbReference type="RefSeq" id="WP_012301393.1">
    <property type="nucleotide sequence ID" value="NC_010424.1"/>
</dbReference>
<dbReference type="SMR" id="B1I1L4"/>
<dbReference type="STRING" id="477974.Daud_0240"/>
<dbReference type="KEGG" id="dau:Daud_0240"/>
<dbReference type="eggNOG" id="COG0097">
    <property type="taxonomic scope" value="Bacteria"/>
</dbReference>
<dbReference type="HOGENOM" id="CLU_065464_1_2_9"/>
<dbReference type="OrthoDB" id="9805007at2"/>
<dbReference type="Proteomes" id="UP000008544">
    <property type="component" value="Chromosome"/>
</dbReference>
<dbReference type="GO" id="GO:0022625">
    <property type="term" value="C:cytosolic large ribosomal subunit"/>
    <property type="evidence" value="ECO:0007669"/>
    <property type="project" value="TreeGrafter"/>
</dbReference>
<dbReference type="GO" id="GO:0019843">
    <property type="term" value="F:rRNA binding"/>
    <property type="evidence" value="ECO:0007669"/>
    <property type="project" value="UniProtKB-UniRule"/>
</dbReference>
<dbReference type="GO" id="GO:0003735">
    <property type="term" value="F:structural constituent of ribosome"/>
    <property type="evidence" value="ECO:0007669"/>
    <property type="project" value="InterPro"/>
</dbReference>
<dbReference type="GO" id="GO:0002181">
    <property type="term" value="P:cytoplasmic translation"/>
    <property type="evidence" value="ECO:0007669"/>
    <property type="project" value="TreeGrafter"/>
</dbReference>
<dbReference type="FunFam" id="3.90.930.12:FF:000001">
    <property type="entry name" value="50S ribosomal protein L6"/>
    <property type="match status" value="1"/>
</dbReference>
<dbReference type="Gene3D" id="3.90.930.12">
    <property type="entry name" value="Ribosomal protein L6, alpha-beta domain"/>
    <property type="match status" value="2"/>
</dbReference>
<dbReference type="HAMAP" id="MF_01365_B">
    <property type="entry name" value="Ribosomal_uL6_B"/>
    <property type="match status" value="1"/>
</dbReference>
<dbReference type="InterPro" id="IPR000702">
    <property type="entry name" value="Ribosomal_uL6-like"/>
</dbReference>
<dbReference type="InterPro" id="IPR036789">
    <property type="entry name" value="Ribosomal_uL6-like_a/b-dom_sf"/>
</dbReference>
<dbReference type="InterPro" id="IPR020040">
    <property type="entry name" value="Ribosomal_uL6_a/b-dom"/>
</dbReference>
<dbReference type="InterPro" id="IPR019906">
    <property type="entry name" value="Ribosomal_uL6_bac-type"/>
</dbReference>
<dbReference type="InterPro" id="IPR002358">
    <property type="entry name" value="Ribosomal_uL6_CS"/>
</dbReference>
<dbReference type="NCBIfam" id="TIGR03654">
    <property type="entry name" value="L6_bact"/>
    <property type="match status" value="1"/>
</dbReference>
<dbReference type="PANTHER" id="PTHR11655">
    <property type="entry name" value="60S/50S RIBOSOMAL PROTEIN L6/L9"/>
    <property type="match status" value="1"/>
</dbReference>
<dbReference type="PANTHER" id="PTHR11655:SF14">
    <property type="entry name" value="LARGE RIBOSOMAL SUBUNIT PROTEIN UL6M"/>
    <property type="match status" value="1"/>
</dbReference>
<dbReference type="Pfam" id="PF00347">
    <property type="entry name" value="Ribosomal_L6"/>
    <property type="match status" value="2"/>
</dbReference>
<dbReference type="PIRSF" id="PIRSF002162">
    <property type="entry name" value="Ribosomal_L6"/>
    <property type="match status" value="1"/>
</dbReference>
<dbReference type="PRINTS" id="PR00059">
    <property type="entry name" value="RIBOSOMALL6"/>
</dbReference>
<dbReference type="SUPFAM" id="SSF56053">
    <property type="entry name" value="Ribosomal protein L6"/>
    <property type="match status" value="2"/>
</dbReference>
<dbReference type="PROSITE" id="PS00525">
    <property type="entry name" value="RIBOSOMAL_L6_1"/>
    <property type="match status" value="1"/>
</dbReference>
<keyword id="KW-1185">Reference proteome</keyword>
<keyword id="KW-0687">Ribonucleoprotein</keyword>
<keyword id="KW-0689">Ribosomal protein</keyword>
<keyword id="KW-0694">RNA-binding</keyword>
<keyword id="KW-0699">rRNA-binding</keyword>
<accession>B1I1L4</accession>
<name>RL6_DESAP</name>
<comment type="function">
    <text evidence="1">This protein binds to the 23S rRNA, and is important in its secondary structure. It is located near the subunit interface in the base of the L7/L12 stalk, and near the tRNA binding site of the peptidyltransferase center.</text>
</comment>
<comment type="subunit">
    <text evidence="1">Part of the 50S ribosomal subunit.</text>
</comment>
<comment type="similarity">
    <text evidence="1">Belongs to the universal ribosomal protein uL6 family.</text>
</comment>
<reference key="1">
    <citation type="submission" date="2007-10" db="EMBL/GenBank/DDBJ databases">
        <title>Complete sequence of chromosome of Desulforudis audaxviator MP104C.</title>
        <authorList>
            <person name="Copeland A."/>
            <person name="Lucas S."/>
            <person name="Lapidus A."/>
            <person name="Barry K."/>
            <person name="Glavina del Rio T."/>
            <person name="Dalin E."/>
            <person name="Tice H."/>
            <person name="Bruce D."/>
            <person name="Pitluck S."/>
            <person name="Lowry S.R."/>
            <person name="Larimer F."/>
            <person name="Land M.L."/>
            <person name="Hauser L."/>
            <person name="Kyrpides N."/>
            <person name="Ivanova N.N."/>
            <person name="Richardson P."/>
        </authorList>
    </citation>
    <scope>NUCLEOTIDE SEQUENCE [LARGE SCALE GENOMIC DNA]</scope>
    <source>
        <strain>MP104C</strain>
    </source>
</reference>
<feature type="chain" id="PRO_1000143976" description="Large ribosomal subunit protein uL6">
    <location>
        <begin position="1"/>
        <end position="181"/>
    </location>
</feature>
<evidence type="ECO:0000255" key="1">
    <source>
        <dbReference type="HAMAP-Rule" id="MF_01365"/>
    </source>
</evidence>
<evidence type="ECO:0000305" key="2"/>
<proteinExistence type="inferred from homology"/>
<gene>
    <name evidence="1" type="primary">rplF</name>
    <name type="ordered locus">Daud_0240</name>
</gene>
<protein>
    <recommendedName>
        <fullName evidence="1">Large ribosomal subunit protein uL6</fullName>
    </recommendedName>
    <alternativeName>
        <fullName evidence="2">50S ribosomal protein L6</fullName>
    </alternativeName>
</protein>
<sequence length="181" mass="19883">MSRIGRMPIKIPPDVKITIEGNTVRVEGPKGRLEREIPANTKLVVENGRAVIEKAGEEKPGTAMLGLTRTLVANMVDGVTKGFQRNLELTGVGYRASLQGRKLVMTLGYSHPVEYEPPADIEIEVPAVTRIIIRGADKEKVGRVAAKIRSFRSPEPYKGKGVRYEGEKIRLKAGKAGLKKR</sequence>
<organism>
    <name type="scientific">Desulforudis audaxviator (strain MP104C)</name>
    <dbReference type="NCBI Taxonomy" id="477974"/>
    <lineage>
        <taxon>Bacteria</taxon>
        <taxon>Bacillati</taxon>
        <taxon>Bacillota</taxon>
        <taxon>Clostridia</taxon>
        <taxon>Thermoanaerobacterales</taxon>
        <taxon>Candidatus Desulforudaceae</taxon>
        <taxon>Candidatus Desulforudis</taxon>
    </lineage>
</organism>